<comment type="subcellular location">
    <subcellularLocation>
        <location evidence="1">Cell membrane</location>
        <topology evidence="1">Multi-pass membrane protein</topology>
    </subcellularLocation>
</comment>
<comment type="similarity">
    <text evidence="1">Belongs to the UPF0391 family.</text>
</comment>
<evidence type="ECO:0000255" key="1">
    <source>
        <dbReference type="HAMAP-Rule" id="MF_01361"/>
    </source>
</evidence>
<protein>
    <recommendedName>
        <fullName evidence="1">UPF0391 membrane protein GFO_1615</fullName>
    </recommendedName>
</protein>
<organism>
    <name type="scientific">Christiangramia forsetii (strain DSM 17595 / CGMCC 1.15422 / KT0803)</name>
    <name type="common">Gramella forsetii</name>
    <dbReference type="NCBI Taxonomy" id="411154"/>
    <lineage>
        <taxon>Bacteria</taxon>
        <taxon>Pseudomonadati</taxon>
        <taxon>Bacteroidota</taxon>
        <taxon>Flavobacteriia</taxon>
        <taxon>Flavobacteriales</taxon>
        <taxon>Flavobacteriaceae</taxon>
        <taxon>Christiangramia</taxon>
    </lineage>
</organism>
<proteinExistence type="inferred from homology"/>
<feature type="chain" id="PRO_0000298595" description="UPF0391 membrane protein GFO_1615">
    <location>
        <begin position="1"/>
        <end position="53"/>
    </location>
</feature>
<feature type="transmembrane region" description="Helical" evidence="1">
    <location>
        <begin position="4"/>
        <end position="24"/>
    </location>
</feature>
<feature type="transmembrane region" description="Helical" evidence="1">
    <location>
        <begin position="27"/>
        <end position="47"/>
    </location>
</feature>
<gene>
    <name type="ordered locus">GFO_1615</name>
</gene>
<sequence length="53" mass="5809">MVRLIVIFLIIAIIAAIFGFGGVAEGAADIAKIIFYIFLVLLVISVLSRLFRK</sequence>
<reference key="1">
    <citation type="journal article" date="2006" name="Environ. Microbiol.">
        <title>Whole genome analysis of the marine Bacteroidetes'Gramella forsetii' reveals adaptations to degradation of polymeric organic matter.</title>
        <authorList>
            <person name="Bauer M."/>
            <person name="Kube M."/>
            <person name="Teeling H."/>
            <person name="Richter M."/>
            <person name="Lombardot T."/>
            <person name="Allers E."/>
            <person name="Wuerdemann C.A."/>
            <person name="Quast C."/>
            <person name="Kuhl H."/>
            <person name="Knaust F."/>
            <person name="Woebken D."/>
            <person name="Bischof K."/>
            <person name="Mussmann M."/>
            <person name="Choudhuri J.V."/>
            <person name="Meyer F."/>
            <person name="Reinhardt R."/>
            <person name="Amann R.I."/>
            <person name="Gloeckner F.O."/>
        </authorList>
    </citation>
    <scope>NUCLEOTIDE SEQUENCE [LARGE SCALE GENOMIC DNA]</scope>
    <source>
        <strain>DSM 17595 / CGMCC 1.15422 / KT0803</strain>
    </source>
</reference>
<name>Y1615_CHRFK</name>
<dbReference type="EMBL" id="CU207366">
    <property type="protein sequence ID" value="CAL66588.1"/>
    <property type="molecule type" value="Genomic_DNA"/>
</dbReference>
<dbReference type="RefSeq" id="WP_011709496.1">
    <property type="nucleotide sequence ID" value="NC_008571.1"/>
</dbReference>
<dbReference type="KEGG" id="gfo:GFO_1615"/>
<dbReference type="eggNOG" id="COG5487">
    <property type="taxonomic scope" value="Bacteria"/>
</dbReference>
<dbReference type="HOGENOM" id="CLU_187346_0_1_10"/>
<dbReference type="Proteomes" id="UP000000755">
    <property type="component" value="Chromosome"/>
</dbReference>
<dbReference type="GO" id="GO:0005886">
    <property type="term" value="C:plasma membrane"/>
    <property type="evidence" value="ECO:0007669"/>
    <property type="project" value="UniProtKB-SubCell"/>
</dbReference>
<dbReference type="HAMAP" id="MF_01361">
    <property type="entry name" value="UPF0391"/>
    <property type="match status" value="1"/>
</dbReference>
<dbReference type="InterPro" id="IPR009760">
    <property type="entry name" value="DUF1328"/>
</dbReference>
<dbReference type="NCBIfam" id="NF010226">
    <property type="entry name" value="PRK13682.1-1"/>
    <property type="match status" value="1"/>
</dbReference>
<dbReference type="NCBIfam" id="NF010229">
    <property type="entry name" value="PRK13682.1-4"/>
    <property type="match status" value="1"/>
</dbReference>
<dbReference type="Pfam" id="PF07043">
    <property type="entry name" value="DUF1328"/>
    <property type="match status" value="1"/>
</dbReference>
<dbReference type="PIRSF" id="PIRSF036466">
    <property type="entry name" value="UCP036466"/>
    <property type="match status" value="1"/>
</dbReference>
<keyword id="KW-1003">Cell membrane</keyword>
<keyword id="KW-0472">Membrane</keyword>
<keyword id="KW-0812">Transmembrane</keyword>
<keyword id="KW-1133">Transmembrane helix</keyword>
<accession>A0M1U3</accession>